<comment type="subcellular location">
    <subcellularLocation>
        <location evidence="2">Cell membrane</location>
        <topology evidence="2">Lipid-anchor</topology>
        <orientation evidence="2">Cytoplasmic side</orientation>
    </subcellularLocation>
</comment>
<comment type="similarity">
    <text evidence="2">Belongs to the small GTPase superfamily. Rho family. CDC42 subfamily.</text>
</comment>
<proteinExistence type="inferred from homology"/>
<feature type="chain" id="PRO_0000198953" description="Cell division control protein 42 homolog">
    <location>
        <begin position="1"/>
        <end position="187"/>
    </location>
</feature>
<feature type="propeptide" id="PRO_0000281283" description="Removed in mature form" evidence="1">
    <location>
        <begin position="188"/>
        <end position="190"/>
    </location>
</feature>
<feature type="short sequence motif" description="Effector region" evidence="1">
    <location>
        <begin position="34"/>
        <end position="42"/>
    </location>
</feature>
<feature type="binding site" evidence="1">
    <location>
        <begin position="12"/>
        <end position="19"/>
    </location>
    <ligand>
        <name>GTP</name>
        <dbReference type="ChEBI" id="CHEBI:37565"/>
    </ligand>
</feature>
<feature type="binding site" evidence="1">
    <location>
        <begin position="59"/>
        <end position="63"/>
    </location>
    <ligand>
        <name>GTP</name>
        <dbReference type="ChEBI" id="CHEBI:37565"/>
    </ligand>
</feature>
<feature type="binding site" evidence="1">
    <location>
        <begin position="117"/>
        <end position="120"/>
    </location>
    <ligand>
        <name>GTP</name>
        <dbReference type="ChEBI" id="CHEBI:37565"/>
    </ligand>
</feature>
<feature type="modified residue" description="Cysteine methyl ester" evidence="1">
    <location>
        <position position="187"/>
    </location>
</feature>
<feature type="lipid moiety-binding region" description="S-geranylgeranyl cysteine" evidence="1">
    <location>
        <position position="187"/>
    </location>
</feature>
<gene>
    <name type="primary">CDC42</name>
</gene>
<organism>
    <name type="scientific">Colletotrichum gloeosporioides</name>
    <name type="common">Anthracnose fungus</name>
    <name type="synonym">Glomerella cingulata</name>
    <dbReference type="NCBI Taxonomy" id="474922"/>
    <lineage>
        <taxon>Eukaryota</taxon>
        <taxon>Fungi</taxon>
        <taxon>Dikarya</taxon>
        <taxon>Ascomycota</taxon>
        <taxon>Pezizomycotina</taxon>
        <taxon>Sordariomycetes</taxon>
        <taxon>Hypocreomycetidae</taxon>
        <taxon>Glomerellales</taxon>
        <taxon>Glomerellaceae</taxon>
        <taxon>Colletotrichum</taxon>
        <taxon>Colletotrichum gloeosporioides species complex</taxon>
    </lineage>
</organism>
<keyword id="KW-0131">Cell cycle</keyword>
<keyword id="KW-0132">Cell division</keyword>
<keyword id="KW-1003">Cell membrane</keyword>
<keyword id="KW-0342">GTP-binding</keyword>
<keyword id="KW-0449">Lipoprotein</keyword>
<keyword id="KW-0472">Membrane</keyword>
<keyword id="KW-0488">Methylation</keyword>
<keyword id="KW-0547">Nucleotide-binding</keyword>
<keyword id="KW-0636">Prenylation</keyword>
<dbReference type="EMBL" id="U70875">
    <property type="protein sequence ID" value="AAD00177.1"/>
    <property type="molecule type" value="Genomic_DNA"/>
</dbReference>
<dbReference type="SMR" id="O94103"/>
<dbReference type="PHI-base" id="PHI:8087"/>
<dbReference type="GO" id="GO:0005886">
    <property type="term" value="C:plasma membrane"/>
    <property type="evidence" value="ECO:0007669"/>
    <property type="project" value="UniProtKB-SubCell"/>
</dbReference>
<dbReference type="GO" id="GO:0005525">
    <property type="term" value="F:GTP binding"/>
    <property type="evidence" value="ECO:0007669"/>
    <property type="project" value="UniProtKB-KW"/>
</dbReference>
<dbReference type="GO" id="GO:0003924">
    <property type="term" value="F:GTPase activity"/>
    <property type="evidence" value="ECO:0007669"/>
    <property type="project" value="InterPro"/>
</dbReference>
<dbReference type="GO" id="GO:0051301">
    <property type="term" value="P:cell division"/>
    <property type="evidence" value="ECO:0007669"/>
    <property type="project" value="UniProtKB-KW"/>
</dbReference>
<dbReference type="GO" id="GO:0007264">
    <property type="term" value="P:small GTPase-mediated signal transduction"/>
    <property type="evidence" value="ECO:0007669"/>
    <property type="project" value="InterPro"/>
</dbReference>
<dbReference type="FunFam" id="3.40.50.300:FF:000236">
    <property type="entry name" value="Cell division control protein 42"/>
    <property type="match status" value="1"/>
</dbReference>
<dbReference type="Gene3D" id="3.40.50.300">
    <property type="entry name" value="P-loop containing nucleotide triphosphate hydrolases"/>
    <property type="match status" value="1"/>
</dbReference>
<dbReference type="InterPro" id="IPR027417">
    <property type="entry name" value="P-loop_NTPase"/>
</dbReference>
<dbReference type="InterPro" id="IPR005225">
    <property type="entry name" value="Small_GTP-bd"/>
</dbReference>
<dbReference type="InterPro" id="IPR001806">
    <property type="entry name" value="Small_GTPase"/>
</dbReference>
<dbReference type="InterPro" id="IPR003578">
    <property type="entry name" value="Small_GTPase_Rho"/>
</dbReference>
<dbReference type="NCBIfam" id="TIGR00231">
    <property type="entry name" value="small_GTP"/>
    <property type="match status" value="1"/>
</dbReference>
<dbReference type="PANTHER" id="PTHR24072">
    <property type="entry name" value="RHO FAMILY GTPASE"/>
    <property type="match status" value="1"/>
</dbReference>
<dbReference type="Pfam" id="PF00071">
    <property type="entry name" value="Ras"/>
    <property type="match status" value="1"/>
</dbReference>
<dbReference type="PRINTS" id="PR00449">
    <property type="entry name" value="RASTRNSFRMNG"/>
</dbReference>
<dbReference type="SMART" id="SM00175">
    <property type="entry name" value="RAB"/>
    <property type="match status" value="1"/>
</dbReference>
<dbReference type="SMART" id="SM00173">
    <property type="entry name" value="RAS"/>
    <property type="match status" value="1"/>
</dbReference>
<dbReference type="SMART" id="SM00174">
    <property type="entry name" value="RHO"/>
    <property type="match status" value="1"/>
</dbReference>
<dbReference type="SUPFAM" id="SSF52540">
    <property type="entry name" value="P-loop containing nucleoside triphosphate hydrolases"/>
    <property type="match status" value="1"/>
</dbReference>
<dbReference type="PROSITE" id="PS51420">
    <property type="entry name" value="RHO"/>
    <property type="match status" value="1"/>
</dbReference>
<reference key="1">
    <citation type="submission" date="1996-09" db="EMBL/GenBank/DDBJ databases">
        <title>cdc42 homolog in Colletotrichum gloeosporioides.</title>
        <authorList>
            <person name="Liu Z.-M."/>
            <person name="Kolattukudy P.E."/>
        </authorList>
    </citation>
    <scope>NUCLEOTIDE SEQUENCE [GENOMIC DNA]</scope>
</reference>
<evidence type="ECO:0000250" key="1"/>
<evidence type="ECO:0000305" key="2"/>
<name>CDC42_COLGL</name>
<sequence>MVVATIKCVVVGDGAVGKTCLLISYTTNKFPSEYVPTVFDNYAVTVMIGDEPYTLGLFDTAGQEDYDRLRPLSYPQTDVFLVCFSVTSPASFENVARSGSRGTSPLPGVLLIVAPVTERGSSVREKLSKQKMSPVRKEDGERMAKDLGAVKYVECSALTQFKLKDVFDEAIVAALEPPAPKKKSHKCLVL</sequence>
<accession>O94103</accession>
<protein>
    <recommendedName>
        <fullName>Cell division control protein 42 homolog</fullName>
    </recommendedName>
</protein>